<organism>
    <name type="scientific">Acinetobacter baumannii (strain AB0057)</name>
    <dbReference type="NCBI Taxonomy" id="480119"/>
    <lineage>
        <taxon>Bacteria</taxon>
        <taxon>Pseudomonadati</taxon>
        <taxon>Pseudomonadota</taxon>
        <taxon>Gammaproteobacteria</taxon>
        <taxon>Moraxellales</taxon>
        <taxon>Moraxellaceae</taxon>
        <taxon>Acinetobacter</taxon>
        <taxon>Acinetobacter calcoaceticus/baumannii complex</taxon>
    </lineage>
</organism>
<protein>
    <recommendedName>
        <fullName evidence="1">Serine hydroxymethyltransferase</fullName>
        <shortName evidence="1">SHMT</shortName>
        <shortName evidence="1">Serine methylase</shortName>
        <ecNumber evidence="1">2.1.2.1</ecNumber>
    </recommendedName>
</protein>
<gene>
    <name evidence="1" type="primary">glyA</name>
    <name type="ordered locus">AB57_2665</name>
</gene>
<comment type="function">
    <text evidence="1">Catalyzes the reversible interconversion of serine and glycine with tetrahydrofolate (THF) serving as the one-carbon carrier. This reaction serves as the major source of one-carbon groups required for the biosynthesis of purines, thymidylate, methionine, and other important biomolecules. Also exhibits THF-independent aldolase activity toward beta-hydroxyamino acids, producing glycine and aldehydes, via a retro-aldol mechanism.</text>
</comment>
<comment type="catalytic activity">
    <reaction evidence="1">
        <text>(6R)-5,10-methylene-5,6,7,8-tetrahydrofolate + glycine + H2O = (6S)-5,6,7,8-tetrahydrofolate + L-serine</text>
        <dbReference type="Rhea" id="RHEA:15481"/>
        <dbReference type="ChEBI" id="CHEBI:15377"/>
        <dbReference type="ChEBI" id="CHEBI:15636"/>
        <dbReference type="ChEBI" id="CHEBI:33384"/>
        <dbReference type="ChEBI" id="CHEBI:57305"/>
        <dbReference type="ChEBI" id="CHEBI:57453"/>
        <dbReference type="EC" id="2.1.2.1"/>
    </reaction>
</comment>
<comment type="cofactor">
    <cofactor evidence="1">
        <name>pyridoxal 5'-phosphate</name>
        <dbReference type="ChEBI" id="CHEBI:597326"/>
    </cofactor>
</comment>
<comment type="pathway">
    <text evidence="1">One-carbon metabolism; tetrahydrofolate interconversion.</text>
</comment>
<comment type="pathway">
    <text evidence="1">Amino-acid biosynthesis; glycine biosynthesis; glycine from L-serine: step 1/1.</text>
</comment>
<comment type="subunit">
    <text evidence="1">Homodimer.</text>
</comment>
<comment type="subcellular location">
    <subcellularLocation>
        <location evidence="1">Cytoplasm</location>
    </subcellularLocation>
</comment>
<comment type="similarity">
    <text evidence="1">Belongs to the SHMT family.</text>
</comment>
<proteinExistence type="inferred from homology"/>
<feature type="chain" id="PRO_1000116817" description="Serine hydroxymethyltransferase">
    <location>
        <begin position="1"/>
        <end position="417"/>
    </location>
</feature>
<feature type="binding site" evidence="1">
    <location>
        <position position="120"/>
    </location>
    <ligand>
        <name>(6S)-5,6,7,8-tetrahydrofolate</name>
        <dbReference type="ChEBI" id="CHEBI:57453"/>
    </ligand>
</feature>
<feature type="binding site" evidence="1">
    <location>
        <begin position="124"/>
        <end position="126"/>
    </location>
    <ligand>
        <name>(6S)-5,6,7,8-tetrahydrofolate</name>
        <dbReference type="ChEBI" id="CHEBI:57453"/>
    </ligand>
</feature>
<feature type="binding site" evidence="1">
    <location>
        <begin position="354"/>
        <end position="356"/>
    </location>
    <ligand>
        <name>(6S)-5,6,7,8-tetrahydrofolate</name>
        <dbReference type="ChEBI" id="CHEBI:57453"/>
    </ligand>
</feature>
<feature type="site" description="Plays an important role in substrate specificity" evidence="1">
    <location>
        <position position="228"/>
    </location>
</feature>
<feature type="modified residue" description="N6-(pyridoxal phosphate)lysine" evidence="1">
    <location>
        <position position="229"/>
    </location>
</feature>
<name>GLYA_ACIB5</name>
<evidence type="ECO:0000255" key="1">
    <source>
        <dbReference type="HAMAP-Rule" id="MF_00051"/>
    </source>
</evidence>
<dbReference type="EC" id="2.1.2.1" evidence="1"/>
<dbReference type="EMBL" id="CP001182">
    <property type="protein sequence ID" value="ACJ42769.1"/>
    <property type="molecule type" value="Genomic_DNA"/>
</dbReference>
<dbReference type="RefSeq" id="WP_000457893.1">
    <property type="nucleotide sequence ID" value="NC_011586.2"/>
</dbReference>
<dbReference type="SMR" id="B7I2R7"/>
<dbReference type="GeneID" id="92894564"/>
<dbReference type="KEGG" id="abn:AB57_2665"/>
<dbReference type="HOGENOM" id="CLU_022477_2_1_6"/>
<dbReference type="UniPathway" id="UPA00193"/>
<dbReference type="UniPathway" id="UPA00288">
    <property type="reaction ID" value="UER01023"/>
</dbReference>
<dbReference type="Proteomes" id="UP000007094">
    <property type="component" value="Chromosome"/>
</dbReference>
<dbReference type="GO" id="GO:0005829">
    <property type="term" value="C:cytosol"/>
    <property type="evidence" value="ECO:0007669"/>
    <property type="project" value="TreeGrafter"/>
</dbReference>
<dbReference type="GO" id="GO:0004372">
    <property type="term" value="F:glycine hydroxymethyltransferase activity"/>
    <property type="evidence" value="ECO:0007669"/>
    <property type="project" value="UniProtKB-UniRule"/>
</dbReference>
<dbReference type="GO" id="GO:0030170">
    <property type="term" value="F:pyridoxal phosphate binding"/>
    <property type="evidence" value="ECO:0007669"/>
    <property type="project" value="UniProtKB-UniRule"/>
</dbReference>
<dbReference type="GO" id="GO:0019264">
    <property type="term" value="P:glycine biosynthetic process from serine"/>
    <property type="evidence" value="ECO:0007669"/>
    <property type="project" value="UniProtKB-UniRule"/>
</dbReference>
<dbReference type="GO" id="GO:0035999">
    <property type="term" value="P:tetrahydrofolate interconversion"/>
    <property type="evidence" value="ECO:0007669"/>
    <property type="project" value="UniProtKB-UniRule"/>
</dbReference>
<dbReference type="CDD" id="cd00378">
    <property type="entry name" value="SHMT"/>
    <property type="match status" value="1"/>
</dbReference>
<dbReference type="FunFam" id="3.40.640.10:FF:000001">
    <property type="entry name" value="Serine hydroxymethyltransferase"/>
    <property type="match status" value="1"/>
</dbReference>
<dbReference type="FunFam" id="3.90.1150.10:FF:000003">
    <property type="entry name" value="Serine hydroxymethyltransferase"/>
    <property type="match status" value="1"/>
</dbReference>
<dbReference type="Gene3D" id="3.90.1150.10">
    <property type="entry name" value="Aspartate Aminotransferase, domain 1"/>
    <property type="match status" value="1"/>
</dbReference>
<dbReference type="Gene3D" id="3.40.640.10">
    <property type="entry name" value="Type I PLP-dependent aspartate aminotransferase-like (Major domain)"/>
    <property type="match status" value="1"/>
</dbReference>
<dbReference type="HAMAP" id="MF_00051">
    <property type="entry name" value="SHMT"/>
    <property type="match status" value="1"/>
</dbReference>
<dbReference type="InterPro" id="IPR015424">
    <property type="entry name" value="PyrdxlP-dep_Trfase"/>
</dbReference>
<dbReference type="InterPro" id="IPR015421">
    <property type="entry name" value="PyrdxlP-dep_Trfase_major"/>
</dbReference>
<dbReference type="InterPro" id="IPR015422">
    <property type="entry name" value="PyrdxlP-dep_Trfase_small"/>
</dbReference>
<dbReference type="InterPro" id="IPR001085">
    <property type="entry name" value="Ser_HO-MeTrfase"/>
</dbReference>
<dbReference type="InterPro" id="IPR049943">
    <property type="entry name" value="Ser_HO-MeTrfase-like"/>
</dbReference>
<dbReference type="InterPro" id="IPR019798">
    <property type="entry name" value="Ser_HO-MeTrfase_PLP_BS"/>
</dbReference>
<dbReference type="InterPro" id="IPR039429">
    <property type="entry name" value="SHMT-like_dom"/>
</dbReference>
<dbReference type="NCBIfam" id="NF000586">
    <property type="entry name" value="PRK00011.1"/>
    <property type="match status" value="1"/>
</dbReference>
<dbReference type="PANTHER" id="PTHR11680">
    <property type="entry name" value="SERINE HYDROXYMETHYLTRANSFERASE"/>
    <property type="match status" value="1"/>
</dbReference>
<dbReference type="PANTHER" id="PTHR11680:SF50">
    <property type="entry name" value="SERINE HYDROXYMETHYLTRANSFERASE"/>
    <property type="match status" value="1"/>
</dbReference>
<dbReference type="Pfam" id="PF00464">
    <property type="entry name" value="SHMT"/>
    <property type="match status" value="1"/>
</dbReference>
<dbReference type="PIRSF" id="PIRSF000412">
    <property type="entry name" value="SHMT"/>
    <property type="match status" value="1"/>
</dbReference>
<dbReference type="SUPFAM" id="SSF53383">
    <property type="entry name" value="PLP-dependent transferases"/>
    <property type="match status" value="1"/>
</dbReference>
<dbReference type="PROSITE" id="PS00096">
    <property type="entry name" value="SHMT"/>
    <property type="match status" value="1"/>
</dbReference>
<reference key="1">
    <citation type="journal article" date="2008" name="J. Bacteriol.">
        <title>Comparative genome sequence analysis of multidrug-resistant Acinetobacter baumannii.</title>
        <authorList>
            <person name="Adams M.D."/>
            <person name="Goglin K."/>
            <person name="Molyneaux N."/>
            <person name="Hujer K.M."/>
            <person name="Lavender H."/>
            <person name="Jamison J.J."/>
            <person name="MacDonald I.J."/>
            <person name="Martin K.M."/>
            <person name="Russo T."/>
            <person name="Campagnari A.A."/>
            <person name="Hujer A.M."/>
            <person name="Bonomo R.A."/>
            <person name="Gill S.R."/>
        </authorList>
    </citation>
    <scope>NUCLEOTIDE SEQUENCE [LARGE SCALE GENOMIC DNA]</scope>
    <source>
        <strain>AB0057</strain>
    </source>
</reference>
<accession>B7I2R7</accession>
<keyword id="KW-0028">Amino-acid biosynthesis</keyword>
<keyword id="KW-0963">Cytoplasm</keyword>
<keyword id="KW-0554">One-carbon metabolism</keyword>
<keyword id="KW-0663">Pyridoxal phosphate</keyword>
<keyword id="KW-0808">Transferase</keyword>
<sequence length="417" mass="44995">MFANISISEFDPELAQAIASEDERQEAHIELIASENYCSPAVMEAQGSKLTNKYAEGYPGKRYYGGCEFVDVIEQMAIDRAKELFGADYANVQPHAGSQANSAVYLALLNPGDTVLGMSLAHGGHLTHGAKVSFSGKTYNAVQYGLNAETGEIDYEEVERLALEHKPRMIVAGFSAYSRVVDWQRFRDIADKVGAYLFVDMAHVAGLVAAGVYPNPVQIADVTTTTTHKTLRGPRSGLILAKANEEIEKKLQSAVFPGNQGGPLMHAIAAKAICFKEAMSDDFKAYQQQVVKNAQAMAEVFIARGYDVVSGGTDNHLFLLSLIKQDVTGKDADAWLGAAHITVNKNSVPNDPRSPFVTSGIRIGTPAVTTRGFGEAEVRELAGWIADVIDSKGDEKVIADVKAKVEAVCAKFPVYAK</sequence>